<evidence type="ECO:0000255" key="1">
    <source>
        <dbReference type="HAMAP-Rule" id="MF_00363"/>
    </source>
</evidence>
<organism>
    <name type="scientific">Staphylococcus epidermidis (strain ATCC 12228 / FDA PCI 1200)</name>
    <dbReference type="NCBI Taxonomy" id="176280"/>
    <lineage>
        <taxon>Bacteria</taxon>
        <taxon>Bacillati</taxon>
        <taxon>Bacillota</taxon>
        <taxon>Bacilli</taxon>
        <taxon>Bacillales</taxon>
        <taxon>Staphylococcaceae</taxon>
        <taxon>Staphylococcus</taxon>
    </lineage>
</organism>
<gene>
    <name type="ordered locus">SE_1026</name>
</gene>
<keyword id="KW-0472">Membrane</keyword>
<keyword id="KW-0812">Transmembrane</keyword>
<keyword id="KW-1133">Transmembrane helix</keyword>
<comment type="subcellular location">
    <subcellularLocation>
        <location evidence="1">Membrane</location>
        <topology evidence="1">Single-pass membrane protein</topology>
    </subcellularLocation>
</comment>
<comment type="similarity">
    <text evidence="1">Belongs to the UPF0154 family.</text>
</comment>
<sequence length="75" mass="8751">MAIWVAIILIVIALIAGLIGGFLLARKYMKDYLKKNPPINEEMLRMMMMQMGQKPSQKKINQMMTMMNKNMNQKM</sequence>
<accession>Q8CSP3</accession>
<feature type="chain" id="PRO_0000214979" description="UPF0154 protein SE_1026">
    <location>
        <begin position="1"/>
        <end position="75"/>
    </location>
</feature>
<feature type="transmembrane region" description="Helical" evidence="1">
    <location>
        <begin position="3"/>
        <end position="23"/>
    </location>
</feature>
<name>Y1026_STAES</name>
<proteinExistence type="inferred from homology"/>
<dbReference type="EMBL" id="AE015929">
    <property type="protein sequence ID" value="AAO04623.1"/>
    <property type="molecule type" value="Genomic_DNA"/>
</dbReference>
<dbReference type="RefSeq" id="NP_764581.1">
    <property type="nucleotide sequence ID" value="NC_004461.1"/>
</dbReference>
<dbReference type="RefSeq" id="WP_001831215.1">
    <property type="nucleotide sequence ID" value="NZ_WBME01000057.1"/>
</dbReference>
<dbReference type="SMR" id="Q8CSP3"/>
<dbReference type="KEGG" id="sep:SE_1026"/>
<dbReference type="PATRIC" id="fig|176280.10.peg.1001"/>
<dbReference type="eggNOG" id="COG3763">
    <property type="taxonomic scope" value="Bacteria"/>
</dbReference>
<dbReference type="HOGENOM" id="CLU_180108_0_1_9"/>
<dbReference type="Proteomes" id="UP000001411">
    <property type="component" value="Chromosome"/>
</dbReference>
<dbReference type="GO" id="GO:0005886">
    <property type="term" value="C:plasma membrane"/>
    <property type="evidence" value="ECO:0007669"/>
    <property type="project" value="UniProtKB-UniRule"/>
</dbReference>
<dbReference type="HAMAP" id="MF_00363">
    <property type="entry name" value="UPF0154"/>
    <property type="match status" value="1"/>
</dbReference>
<dbReference type="InterPro" id="IPR005359">
    <property type="entry name" value="UPF0154"/>
</dbReference>
<dbReference type="Pfam" id="PF03672">
    <property type="entry name" value="UPF0154"/>
    <property type="match status" value="1"/>
</dbReference>
<protein>
    <recommendedName>
        <fullName evidence="1">UPF0154 protein SE_1026</fullName>
    </recommendedName>
</protein>
<reference key="1">
    <citation type="journal article" date="2003" name="Mol. Microbiol.">
        <title>Genome-based analysis of virulence genes in a non-biofilm-forming Staphylococcus epidermidis strain (ATCC 12228).</title>
        <authorList>
            <person name="Zhang Y.-Q."/>
            <person name="Ren S.-X."/>
            <person name="Li H.-L."/>
            <person name="Wang Y.-X."/>
            <person name="Fu G."/>
            <person name="Yang J."/>
            <person name="Qin Z.-Q."/>
            <person name="Miao Y.-G."/>
            <person name="Wang W.-Y."/>
            <person name="Chen R.-S."/>
            <person name="Shen Y."/>
            <person name="Chen Z."/>
            <person name="Yuan Z.-H."/>
            <person name="Zhao G.-P."/>
            <person name="Qu D."/>
            <person name="Danchin A."/>
            <person name="Wen Y.-M."/>
        </authorList>
    </citation>
    <scope>NUCLEOTIDE SEQUENCE [LARGE SCALE GENOMIC DNA]</scope>
    <source>
        <strain>ATCC 12228 / FDA PCI 1200</strain>
    </source>
</reference>